<accession>Q3IZ90</accession>
<accession>B8XVS6</accession>
<proteinExistence type="evidence at protein level"/>
<comment type="function">
    <text evidence="3">Radical enzyme that catalyzes the transformation of (2R)-ethylmalonyl-CoA to (2S)-methylsuccinyl-CoA. Is involved in the ethylmalonyl-CoA pathway for acetyl-CoA assimilation required for R.sphaeroides growth on acetate as sole carbon source. Is highly specific for its substrate, ethylmalonyl-CoA, and accepts methylmalonyl-CoA only at 0.2% relative activity.</text>
</comment>
<comment type="catalytic activity">
    <reaction evidence="3">
        <text>(2R)-ethylmalonyl-CoA = (2S)-methylsuccinyl-CoA</text>
        <dbReference type="Rhea" id="RHEA:45576"/>
        <dbReference type="ChEBI" id="CHEBI:84866"/>
        <dbReference type="ChEBI" id="CHEBI:85316"/>
        <dbReference type="EC" id="5.4.99.63"/>
    </reaction>
    <physiologicalReaction direction="left-to-right" evidence="3">
        <dbReference type="Rhea" id="RHEA:45577"/>
    </physiologicalReaction>
</comment>
<comment type="cofactor">
    <cofactor evidence="3">
        <name>adenosylcob(III)alamin</name>
        <dbReference type="ChEBI" id="CHEBI:18408"/>
    </cofactor>
</comment>
<comment type="biophysicochemical properties">
    <kinetics>
        <KM evidence="3">60 uM for (2R)-ethylmalonyl-CoA</KM>
        <Vmax evidence="3">7.0 umol/min/mg enzyme with (2R)-ethylmalonyl-CoA as substrate</Vmax>
    </kinetics>
    <phDependence>
        <text evidence="3">Optimum pH is 6.5-8.0.</text>
    </phDependence>
</comment>
<comment type="subunit">
    <text evidence="3">Homodimer.</text>
</comment>
<comment type="disruption phenotype">
    <text evidence="3">Cells lacking this gene are able to grow with carbon substrates that do not require the operation of the (complete) ethylmalonyl-CoA pathway (succinate, propionate/HCO3(-), or acetate plus glyoxylate) but are unable to use acetate or acetoacetate as the sole carbon source. They show undetectable ethylmalonyl-CoA mutase activity when grown with acetate plus glyoxylate, while are still able to convert methylmalonyl-CoA to succinyl-CoA.</text>
</comment>
<comment type="similarity">
    <text evidence="5">Belongs to the methylmalonyl-CoA mutase family.</text>
</comment>
<gene>
    <name evidence="4 7" type="primary">ecm</name>
    <name evidence="6" type="synonym">meaA</name>
    <name evidence="5" type="ordered locus">RHOS4_25760</name>
    <name evidence="6" type="ORF">RSP_0961</name>
</gene>
<evidence type="ECO:0000250" key="1">
    <source>
        <dbReference type="UniProtKB" id="P11653"/>
    </source>
</evidence>
<evidence type="ECO:0000255" key="2">
    <source>
        <dbReference type="PROSITE-ProRule" id="PRU00666"/>
    </source>
</evidence>
<evidence type="ECO:0000269" key="3">
    <source>
    </source>
</evidence>
<evidence type="ECO:0000303" key="4">
    <source>
    </source>
</evidence>
<evidence type="ECO:0000305" key="5"/>
<evidence type="ECO:0000312" key="6">
    <source>
        <dbReference type="EMBL" id="ABA80144.1"/>
    </source>
</evidence>
<evidence type="ECO:0000312" key="7">
    <source>
        <dbReference type="EMBL" id="ACJ71670.1"/>
    </source>
</evidence>
<protein>
    <recommendedName>
        <fullName evidence="4">Ethylmalonyl-CoA mutase</fullName>
        <ecNumber evidence="3">5.4.99.63</ecNumber>
    </recommendedName>
</protein>
<name>ECM_CERS4</name>
<feature type="chain" id="PRO_0000447588" description="Ethylmalonyl-CoA mutase">
    <location>
        <begin position="1"/>
        <end position="652"/>
    </location>
</feature>
<feature type="domain" description="B12-binding" evidence="2">
    <location>
        <begin position="519"/>
        <end position="647"/>
    </location>
</feature>
<feature type="binding site" description="axial binding residue" evidence="1">
    <location>
        <position position="532"/>
    </location>
    <ligand>
        <name>adenosylcob(III)alamin</name>
        <dbReference type="ChEBI" id="CHEBI:18408"/>
    </ligand>
    <ligandPart>
        <name>Co</name>
        <dbReference type="ChEBI" id="CHEBI:27638"/>
    </ligandPart>
</feature>
<organism>
    <name type="scientific">Cereibacter sphaeroides (strain ATCC 17023 / DSM 158 / JCM 6121 / CCUG 31486 / LMG 2827 / NBRC 12203 / NCIMB 8253 / ATH 2.4.1.)</name>
    <name type="common">Rhodobacter sphaeroides</name>
    <dbReference type="NCBI Taxonomy" id="272943"/>
    <lineage>
        <taxon>Bacteria</taxon>
        <taxon>Pseudomonadati</taxon>
        <taxon>Pseudomonadota</taxon>
        <taxon>Alphaproteobacteria</taxon>
        <taxon>Rhodobacterales</taxon>
        <taxon>Paracoccaceae</taxon>
        <taxon>Cereibacter</taxon>
    </lineage>
</organism>
<reference key="1">
    <citation type="journal article" date="2008" name="J. Biol. Chem.">
        <title>Ethylmalonyl-CoA mutase from Rhodobacter sphaeroides defines a new subclade of coenzyme B12-dependent acyl-CoA mutases.</title>
        <authorList>
            <person name="Erb T.J."/>
            <person name="Retey J."/>
            <person name="Fuchs G."/>
            <person name="Alber B.E."/>
        </authorList>
    </citation>
    <scope>NUCLEOTIDE SEQUENCE [GENOMIC DNA]</scope>
    <scope>FUNCTION</scope>
    <scope>CATALYTIC ACTIVITY</scope>
    <scope>SUBSTRATE SPECIFICITY</scope>
    <scope>BIOPHYSICOCHEMICAL PROPERTIES</scope>
    <scope>COFACTOR</scope>
    <scope>DISRUPTION PHENOTYPE</scope>
    <scope>SUBUNIT</scope>
    <source>
        <strain>ATCC 17023 / DSM 158 / JCM 6121 / CCUG 31486 / LMG 2827 / NBRC 12203 / NCIMB 8253 / ATH 2.4.1.</strain>
    </source>
</reference>
<reference key="2">
    <citation type="submission" date="2005-09" db="EMBL/GenBank/DDBJ databases">
        <title>Complete sequence of chromosome 1 of Rhodobacter sphaeroides 2.4.1.</title>
        <authorList>
            <person name="Copeland A."/>
            <person name="Lucas S."/>
            <person name="Lapidus A."/>
            <person name="Barry K."/>
            <person name="Detter J.C."/>
            <person name="Glavina T."/>
            <person name="Hammon N."/>
            <person name="Israni S."/>
            <person name="Pitluck S."/>
            <person name="Richardson P."/>
            <person name="Mackenzie C."/>
            <person name="Choudhary M."/>
            <person name="Larimer F."/>
            <person name="Hauser L.J."/>
            <person name="Land M."/>
            <person name="Donohue T.J."/>
            <person name="Kaplan S."/>
        </authorList>
    </citation>
    <scope>NUCLEOTIDE SEQUENCE [LARGE SCALE GENOMIC DNA]</scope>
    <source>
        <strain>ATCC 17023 / DSM 158 / JCM 6121 / CCUG 31486 / LMG 2827 / NBRC 12203 / NCIMB 8253 / ATH 2.4.1.</strain>
    </source>
</reference>
<keyword id="KW-0846">Cobalamin</keyword>
<keyword id="KW-0170">Cobalt</keyword>
<keyword id="KW-0413">Isomerase</keyword>
<keyword id="KW-0479">Metal-binding</keyword>
<keyword id="KW-1185">Reference proteome</keyword>
<dbReference type="EC" id="5.4.99.63" evidence="3"/>
<dbReference type="EMBL" id="FJ445412">
    <property type="protein sequence ID" value="ACJ71670.1"/>
    <property type="molecule type" value="Genomic_DNA"/>
</dbReference>
<dbReference type="EMBL" id="CP000143">
    <property type="protein sequence ID" value="ABA80144.1"/>
    <property type="molecule type" value="Genomic_DNA"/>
</dbReference>
<dbReference type="RefSeq" id="WP_011338628.1">
    <property type="nucleotide sequence ID" value="NC_007493.2"/>
</dbReference>
<dbReference type="RefSeq" id="YP_354045.1">
    <property type="nucleotide sequence ID" value="NC_007493.2"/>
</dbReference>
<dbReference type="SMR" id="Q3IZ90"/>
<dbReference type="STRING" id="272943.RSP_0961"/>
<dbReference type="EnsemblBacteria" id="ABA80144">
    <property type="protein sequence ID" value="ABA80144"/>
    <property type="gene ID" value="RSP_0961"/>
</dbReference>
<dbReference type="GeneID" id="3720752"/>
<dbReference type="KEGG" id="rsp:RSP_0961"/>
<dbReference type="PATRIC" id="fig|272943.9.peg.2933"/>
<dbReference type="eggNOG" id="COG1884">
    <property type="taxonomic scope" value="Bacteria"/>
</dbReference>
<dbReference type="eggNOG" id="COG2185">
    <property type="taxonomic scope" value="Bacteria"/>
</dbReference>
<dbReference type="OrthoDB" id="9762378at2"/>
<dbReference type="PhylomeDB" id="Q3IZ90"/>
<dbReference type="BRENDA" id="5.4.99.63">
    <property type="organism ID" value="5383"/>
</dbReference>
<dbReference type="Proteomes" id="UP000002703">
    <property type="component" value="Chromosome 1"/>
</dbReference>
<dbReference type="GO" id="GO:0031419">
    <property type="term" value="F:cobalamin binding"/>
    <property type="evidence" value="ECO:0007669"/>
    <property type="project" value="UniProtKB-KW"/>
</dbReference>
<dbReference type="GO" id="GO:0046872">
    <property type="term" value="F:metal ion binding"/>
    <property type="evidence" value="ECO:0007669"/>
    <property type="project" value="UniProtKB-KW"/>
</dbReference>
<dbReference type="GO" id="GO:0004494">
    <property type="term" value="F:methylmalonyl-CoA mutase activity"/>
    <property type="evidence" value="ECO:0007669"/>
    <property type="project" value="InterPro"/>
</dbReference>
<dbReference type="CDD" id="cd02071">
    <property type="entry name" value="MM_CoA_mut_B12_BD"/>
    <property type="match status" value="1"/>
</dbReference>
<dbReference type="Gene3D" id="3.40.50.280">
    <property type="entry name" value="Cobalamin-binding domain"/>
    <property type="match status" value="1"/>
</dbReference>
<dbReference type="Gene3D" id="3.20.20.240">
    <property type="entry name" value="Methylmalonyl-CoA mutase"/>
    <property type="match status" value="1"/>
</dbReference>
<dbReference type="InterPro" id="IPR006159">
    <property type="entry name" value="Acid_CoA_mut_C"/>
</dbReference>
<dbReference type="InterPro" id="IPR016176">
    <property type="entry name" value="Cbl-dep_enz_cat"/>
</dbReference>
<dbReference type="InterPro" id="IPR006158">
    <property type="entry name" value="Cobalamin-bd"/>
</dbReference>
<dbReference type="InterPro" id="IPR036724">
    <property type="entry name" value="Cobalamin-bd_sf"/>
</dbReference>
<dbReference type="InterPro" id="IPR006099">
    <property type="entry name" value="MeMalonylCoA_mutase_a/b_cat"/>
</dbReference>
<dbReference type="InterPro" id="IPR006098">
    <property type="entry name" value="MMCoA_mutase_a_cat"/>
</dbReference>
<dbReference type="NCBIfam" id="TIGR00640">
    <property type="entry name" value="acid_CoA_mut_C"/>
    <property type="match status" value="1"/>
</dbReference>
<dbReference type="NCBIfam" id="TIGR00641">
    <property type="entry name" value="acid_CoA_mut_N"/>
    <property type="match status" value="1"/>
</dbReference>
<dbReference type="PANTHER" id="PTHR48101:SF3">
    <property type="entry name" value="COENZYME B12-DEPENDENT MUTASE"/>
    <property type="match status" value="1"/>
</dbReference>
<dbReference type="PANTHER" id="PTHR48101">
    <property type="entry name" value="METHYLMALONYL-COA MUTASE, MITOCHONDRIAL-RELATED"/>
    <property type="match status" value="1"/>
</dbReference>
<dbReference type="Pfam" id="PF02310">
    <property type="entry name" value="B12-binding"/>
    <property type="match status" value="1"/>
</dbReference>
<dbReference type="Pfam" id="PF01642">
    <property type="entry name" value="MM_CoA_mutase"/>
    <property type="match status" value="1"/>
</dbReference>
<dbReference type="SUPFAM" id="SSF52242">
    <property type="entry name" value="Cobalamin (vitamin B12)-binding domain"/>
    <property type="match status" value="1"/>
</dbReference>
<dbReference type="SUPFAM" id="SSF51703">
    <property type="entry name" value="Cobalamin (vitamin B12)-dependent enzymes"/>
    <property type="match status" value="1"/>
</dbReference>
<dbReference type="PROSITE" id="PS51332">
    <property type="entry name" value="B12_BINDING"/>
    <property type="match status" value="1"/>
</dbReference>
<sequence length="652" mass="71190">MTQKDSPWLFRTYAGHSTAKASNALYRTNLAKGQTGLSVAFDLPTQTGYDSDDALARGEVGKVGVPICHLGDMRMLFDQIPLEQMNTSMTINATAPWLLALYIAVAEEQGADISKLQGTVQNDLMKEYLSRGTYICPPRPSLRMITDVAAYTRVHLPKWNPMNVCSYHLQEAGATPEQELAFALATGIAVLDDLRTKVPAEHFPAMVGRISFFVNAGIRFVTEMCKMRAFVDLWDEICRDRYGIEEEKYRRFRYGVQVNSLGLTEQQPENNVYRILIEMLAVTLSKKARARAVQLPAWNEALGLPRPWDQQWSLRMQQILAYESDLLEYEDLFDGNPAIERKVEALKDGAREELAHIEAMGGAIEAIDYMKARLVESNAERIARVETGETVVVGVNRWTSGAPSPLTTGDGAIMVADPEAERDQIARLEAWRAGRDGAAVAAALAELRRAATSGENVMPASIAAAKAGATTGEWAAELRRAFGEFRGPTGVARAPSNRTEGLDPIREAVQAVSARLGRPLKFVVGKPGLDGHSNGAEQIAARARDCGMDITYDGIRLTPAEIVAKAADERAHVLGLSILSGSHMPLVTEVLAEMRRAGLDVPLIVGGIIPEEDAAELRASGVAAVYTPKDFELNRIMMDIVGLVDRTALAAE</sequence>